<gene>
    <name type="primary">Bp10</name>
</gene>
<dbReference type="EC" id="1.10.3.-"/>
<dbReference type="EMBL" id="X64257">
    <property type="protein sequence ID" value="CAA45554.1"/>
    <property type="molecule type" value="Genomic_DNA"/>
</dbReference>
<dbReference type="PIR" id="S23763">
    <property type="entry name" value="S23763"/>
</dbReference>
<dbReference type="RefSeq" id="XP_013749860.1">
    <property type="nucleotide sequence ID" value="XM_013894406.1"/>
</dbReference>
<dbReference type="SMR" id="Q00624"/>
<dbReference type="GlyCosmos" id="Q00624">
    <property type="glycosylation" value="6 sites, No reported glycans"/>
</dbReference>
<dbReference type="EnsemblPlants" id="CDY43995">
    <property type="protein sequence ID" value="CDY43995"/>
    <property type="gene ID" value="GSBRNA2T00079392001"/>
</dbReference>
<dbReference type="GeneID" id="106452325"/>
<dbReference type="Gramene" id="CDY43995">
    <property type="protein sequence ID" value="CDY43995"/>
    <property type="gene ID" value="GSBRNA2T00079392001"/>
</dbReference>
<dbReference type="KEGG" id="bna:106452325"/>
<dbReference type="OMA" id="PTITFEW"/>
<dbReference type="OrthoDB" id="2121828at2759"/>
<dbReference type="GO" id="GO:0005576">
    <property type="term" value="C:extracellular region"/>
    <property type="evidence" value="ECO:0007669"/>
    <property type="project" value="UniProtKB-SubCell"/>
</dbReference>
<dbReference type="GO" id="GO:0005507">
    <property type="term" value="F:copper ion binding"/>
    <property type="evidence" value="ECO:0007669"/>
    <property type="project" value="InterPro"/>
</dbReference>
<dbReference type="GO" id="GO:0016491">
    <property type="term" value="F:oxidoreductase activity"/>
    <property type="evidence" value="ECO:0007669"/>
    <property type="project" value="UniProtKB-KW"/>
</dbReference>
<dbReference type="CDD" id="cd13872">
    <property type="entry name" value="CuRO_2_AAO_like_1"/>
    <property type="match status" value="1"/>
</dbReference>
<dbReference type="CDD" id="cd13894">
    <property type="entry name" value="CuRO_3_AAO_like_1"/>
    <property type="match status" value="1"/>
</dbReference>
<dbReference type="Gene3D" id="2.60.40.420">
    <property type="entry name" value="Cupredoxins - blue copper proteins"/>
    <property type="match status" value="3"/>
</dbReference>
<dbReference type="InterPro" id="IPR011707">
    <property type="entry name" value="Cu-oxidase-like_N"/>
</dbReference>
<dbReference type="InterPro" id="IPR001117">
    <property type="entry name" value="Cu-oxidase_2nd"/>
</dbReference>
<dbReference type="InterPro" id="IPR011706">
    <property type="entry name" value="Cu-oxidase_C"/>
</dbReference>
<dbReference type="InterPro" id="IPR045087">
    <property type="entry name" value="Cu-oxidase_fam"/>
</dbReference>
<dbReference type="InterPro" id="IPR008972">
    <property type="entry name" value="Cupredoxin"/>
</dbReference>
<dbReference type="InterPro" id="IPR034271">
    <property type="entry name" value="CuRO_2_AO-like"/>
</dbReference>
<dbReference type="InterPro" id="IPR034275">
    <property type="entry name" value="CuRO_3_AO-like"/>
</dbReference>
<dbReference type="PANTHER" id="PTHR11709:SF471">
    <property type="entry name" value="(RAPE) HYPOTHETICAL PROTEIN"/>
    <property type="match status" value="1"/>
</dbReference>
<dbReference type="PANTHER" id="PTHR11709">
    <property type="entry name" value="MULTI-COPPER OXIDASE"/>
    <property type="match status" value="1"/>
</dbReference>
<dbReference type="Pfam" id="PF00394">
    <property type="entry name" value="Cu-oxidase"/>
    <property type="match status" value="1"/>
</dbReference>
<dbReference type="Pfam" id="PF07731">
    <property type="entry name" value="Cu-oxidase_2"/>
    <property type="match status" value="1"/>
</dbReference>
<dbReference type="Pfam" id="PF07732">
    <property type="entry name" value="Cu-oxidase_3"/>
    <property type="match status" value="1"/>
</dbReference>
<dbReference type="SUPFAM" id="SSF49503">
    <property type="entry name" value="Cupredoxins"/>
    <property type="match status" value="3"/>
</dbReference>
<proteinExistence type="evidence at transcript level"/>
<feature type="signal peptide" evidence="2">
    <location>
        <begin position="1"/>
        <end position="23"/>
    </location>
</feature>
<feature type="chain" id="PRO_0000002905" description="L-ascorbate oxidase homolog">
    <location>
        <begin position="24"/>
        <end position="555"/>
    </location>
</feature>
<feature type="domain" description="Plastocyanin-like 1">
    <location>
        <begin position="25"/>
        <end position="145"/>
    </location>
</feature>
<feature type="domain" description="Plastocyanin-like 2">
    <location>
        <begin position="158"/>
        <end position="301"/>
    </location>
</feature>
<feature type="domain" description="Plastocyanin-like 3">
    <location>
        <begin position="345"/>
        <end position="524"/>
    </location>
</feature>
<feature type="glycosylation site" description="N-linked (GlcNAc...) asparagine" evidence="2">
    <location>
        <position position="33"/>
    </location>
</feature>
<feature type="glycosylation site" description="N-linked (GlcNAc...) asparagine" evidence="2">
    <location>
        <position position="61"/>
    </location>
</feature>
<feature type="glycosylation site" description="N-linked (GlcNAc...) asparagine" evidence="2">
    <location>
        <position position="110"/>
    </location>
</feature>
<feature type="glycosylation site" description="N-linked (GlcNAc...) asparagine" evidence="2">
    <location>
        <position position="330"/>
    </location>
</feature>
<feature type="glycosylation site" description="N-linked (GlcNAc...) asparagine" evidence="2">
    <location>
        <position position="350"/>
    </location>
</feature>
<feature type="glycosylation site" description="N-linked (GlcNAc...) asparagine" evidence="2">
    <location>
        <position position="422"/>
    </location>
</feature>
<feature type="disulfide bond" evidence="2">
    <location>
        <begin position="103"/>
        <end position="539"/>
    </location>
</feature>
<name>ASOL_BRANA</name>
<sequence>MRGVKLLAACLYLAAAATVVVHAEDPYFHHVWNVTYGTASPLGVPQQVILINGQFPGPNINSTSNNNVIINVFNNLDEPFLLTWNGIQHRKNCWQDGTPGTMCPIMPGTNYTYHFQPKDQIGSYFYYPTTGMHRAAGGYGGLRVNSRLLIPVPYADPEDDYTVLIGDWYTKSHTQLKKFLDGGRTIGRPDGIVINGKSGKGDGSDAPLFTLKPGKTYRVRICNVGVKTSINFRIQNHKMKLVEMEGSHVLQNDYDSLDVHVGQCFGTIVTANQEPKDYYMVASSRFLKTVITTTGLLRYEGGKGPASSQLPAGPVGWAWSLNQFRSFRWNLTASAARPNPQGSYHYGKINITRTIKLVNTQGKVDGKLRFALNGVSHTEPETPLKLAEYFGISDKVFKYDTITDDPTPEQIKNIKIEPNVLNITHRTFVEVVFENHEKSVQSWHLDGYSFFSVAVEPGTWTPEKRKNYNLLDAVSRHTVQVYPKCWAAILLTFDNCGMWNVRSENTERRYLGQQLYASVLSPEKSLRDEYNMPETSLQCGLVKNTPKPVNPYAGA</sequence>
<reference key="1">
    <citation type="journal article" date="1992" name="Plant J.">
        <title>A Brassica napus gene family which shows sequence similarity to ascorbate oxidase is expressed in developing pollen. Molecular characterization and analysis of promoter activity in transgenic tobacco plants.</title>
        <authorList>
            <person name="Albani D."/>
            <person name="Sardana R."/>
            <person name="Robert L.S."/>
            <person name="Altosaar I."/>
            <person name="Arnison P.G."/>
            <person name="Fabijanski S.F."/>
        </authorList>
    </citation>
    <scope>NUCLEOTIDE SEQUENCE [GENOMIC DNA]</scope>
    <scope>TISSUE SPECIFICITY</scope>
    <source>
        <strain>cv. Westar</strain>
    </source>
</reference>
<evidence type="ECO:0000250" key="1"/>
<evidence type="ECO:0000255" key="2"/>
<evidence type="ECO:0000269" key="3">
    <source>
    </source>
</evidence>
<evidence type="ECO:0000305" key="4"/>
<accession>Q00624</accession>
<comment type="function">
    <text evidence="1">Probable oxidase that may be involved in pollen tube growth.</text>
</comment>
<comment type="subcellular location">
    <subcellularLocation>
        <location evidence="4">Secreted</location>
    </subcellularLocation>
</comment>
<comment type="tissue specificity">
    <text evidence="3">Maximal expression in early binucleate microspores; declines considerably in mature trinucleate pollen.</text>
</comment>
<comment type="similarity">
    <text evidence="4">Belongs to the multicopper oxidase family.</text>
</comment>
<keyword id="KW-1015">Disulfide bond</keyword>
<keyword id="KW-0309">Germination</keyword>
<keyword id="KW-0325">Glycoprotein</keyword>
<keyword id="KW-0479">Metal-binding</keyword>
<keyword id="KW-0560">Oxidoreductase</keyword>
<keyword id="KW-0677">Repeat</keyword>
<keyword id="KW-0964">Secreted</keyword>
<keyword id="KW-0732">Signal</keyword>
<organism>
    <name type="scientific">Brassica napus</name>
    <name type="common">Rape</name>
    <dbReference type="NCBI Taxonomy" id="3708"/>
    <lineage>
        <taxon>Eukaryota</taxon>
        <taxon>Viridiplantae</taxon>
        <taxon>Streptophyta</taxon>
        <taxon>Embryophyta</taxon>
        <taxon>Tracheophyta</taxon>
        <taxon>Spermatophyta</taxon>
        <taxon>Magnoliopsida</taxon>
        <taxon>eudicotyledons</taxon>
        <taxon>Gunneridae</taxon>
        <taxon>Pentapetalae</taxon>
        <taxon>rosids</taxon>
        <taxon>malvids</taxon>
        <taxon>Brassicales</taxon>
        <taxon>Brassicaceae</taxon>
        <taxon>Brassiceae</taxon>
        <taxon>Brassica</taxon>
    </lineage>
</organism>
<protein>
    <recommendedName>
        <fullName>L-ascorbate oxidase homolog</fullName>
        <ecNumber>1.10.3.-</ecNumber>
    </recommendedName>
</protein>